<proteinExistence type="evidence at transcript level"/>
<comment type="similarity">
    <text evidence="1">Belongs to the MLP family.</text>
</comment>
<feature type="chain" id="PRO_0000210075" description="MLP-like protein 329">
    <location>
        <begin position="1"/>
        <end position="151"/>
    </location>
</feature>
<dbReference type="EMBL" id="AJ306148">
    <property type="protein sequence ID" value="CAC83585.1"/>
    <property type="molecule type" value="Genomic_DNA"/>
</dbReference>
<dbReference type="EMBL" id="AC005560">
    <property type="protein sequence ID" value="AAC67329.1"/>
    <property type="molecule type" value="Genomic_DNA"/>
</dbReference>
<dbReference type="EMBL" id="CP002685">
    <property type="protein sequence ID" value="AEC05465.1"/>
    <property type="molecule type" value="Genomic_DNA"/>
</dbReference>
<dbReference type="EMBL" id="AY052300">
    <property type="protein sequence ID" value="AAK96493.1"/>
    <property type="molecule type" value="mRNA"/>
</dbReference>
<dbReference type="EMBL" id="AY061925">
    <property type="protein sequence ID" value="AAL31252.1"/>
    <property type="molecule type" value="mRNA"/>
</dbReference>
<dbReference type="PIR" id="H84425">
    <property type="entry name" value="H84425"/>
</dbReference>
<dbReference type="RefSeq" id="NP_565265.1">
    <property type="nucleotide sequence ID" value="NM_126214.5"/>
</dbReference>
<dbReference type="SMR" id="Q9ZVF2"/>
<dbReference type="BioGRID" id="85">
    <property type="interactions" value="4"/>
</dbReference>
<dbReference type="FunCoup" id="Q9ZVF2">
    <property type="interactions" value="15"/>
</dbReference>
<dbReference type="IntAct" id="Q9ZVF2">
    <property type="interactions" value="1"/>
</dbReference>
<dbReference type="STRING" id="3702.Q9ZVF2"/>
<dbReference type="PaxDb" id="3702-AT2G01530.1"/>
<dbReference type="ProteomicsDB" id="238707"/>
<dbReference type="EnsemblPlants" id="AT2G01530.1">
    <property type="protein sequence ID" value="AT2G01530.1"/>
    <property type="gene ID" value="AT2G01530"/>
</dbReference>
<dbReference type="GeneID" id="814682"/>
<dbReference type="Gramene" id="AT2G01530.1">
    <property type="protein sequence ID" value="AT2G01530.1"/>
    <property type="gene ID" value="AT2G01530"/>
</dbReference>
<dbReference type="KEGG" id="ath:AT2G01530"/>
<dbReference type="Araport" id="AT2G01530"/>
<dbReference type="TAIR" id="AT2G01530">
    <property type="gene designation" value="MLP329"/>
</dbReference>
<dbReference type="eggNOG" id="ENOG502S36X">
    <property type="taxonomic scope" value="Eukaryota"/>
</dbReference>
<dbReference type="HOGENOM" id="CLU_081988_7_0_1"/>
<dbReference type="InParanoid" id="Q9ZVF2"/>
<dbReference type="OMA" id="KNMAATH"/>
<dbReference type="OrthoDB" id="1072116at2759"/>
<dbReference type="PhylomeDB" id="Q9ZVF2"/>
<dbReference type="PRO" id="PR:Q9ZVF2"/>
<dbReference type="Proteomes" id="UP000006548">
    <property type="component" value="Chromosome 2"/>
</dbReference>
<dbReference type="ExpressionAtlas" id="Q9ZVF2">
    <property type="expression patterns" value="baseline and differential"/>
</dbReference>
<dbReference type="GO" id="GO:0005739">
    <property type="term" value="C:mitochondrion"/>
    <property type="evidence" value="ECO:0007005"/>
    <property type="project" value="TAIR"/>
</dbReference>
<dbReference type="GO" id="GO:0005507">
    <property type="term" value="F:copper ion binding"/>
    <property type="evidence" value="ECO:0007005"/>
    <property type="project" value="TAIR"/>
</dbReference>
<dbReference type="GO" id="GO:0006952">
    <property type="term" value="P:defense response"/>
    <property type="evidence" value="ECO:0007669"/>
    <property type="project" value="InterPro"/>
</dbReference>
<dbReference type="CDD" id="cd07816">
    <property type="entry name" value="Bet_v1-like"/>
    <property type="match status" value="1"/>
</dbReference>
<dbReference type="FunFam" id="3.30.530.20:FF:000040">
    <property type="entry name" value="MLP-like protein 329"/>
    <property type="match status" value="1"/>
</dbReference>
<dbReference type="Gene3D" id="3.30.530.20">
    <property type="match status" value="1"/>
</dbReference>
<dbReference type="InterPro" id="IPR000916">
    <property type="entry name" value="Bet_v_I/MLP"/>
</dbReference>
<dbReference type="InterPro" id="IPR052006">
    <property type="entry name" value="MLP-like"/>
</dbReference>
<dbReference type="InterPro" id="IPR023393">
    <property type="entry name" value="START-like_dom_sf"/>
</dbReference>
<dbReference type="PANTHER" id="PTHR31338:SF18">
    <property type="entry name" value="MLP-LIKE PROTEIN 328-RELATED"/>
    <property type="match status" value="1"/>
</dbReference>
<dbReference type="PANTHER" id="PTHR31338">
    <property type="entry name" value="POLYKETIDE CYCLASE/DEHYDRASE AND LIPID TRANSPORT SUPERFAMILY PROTEIN"/>
    <property type="match status" value="1"/>
</dbReference>
<dbReference type="Pfam" id="PF00407">
    <property type="entry name" value="Bet_v_1"/>
    <property type="match status" value="1"/>
</dbReference>
<dbReference type="SMART" id="SM01037">
    <property type="entry name" value="Bet_v_1"/>
    <property type="match status" value="1"/>
</dbReference>
<dbReference type="SUPFAM" id="SSF55961">
    <property type="entry name" value="Bet v1-like"/>
    <property type="match status" value="1"/>
</dbReference>
<keyword id="KW-1185">Reference proteome</keyword>
<evidence type="ECO:0000305" key="1"/>
<protein>
    <recommendedName>
        <fullName>MLP-like protein 329</fullName>
    </recommendedName>
</protein>
<sequence>MATSGTYVTEVPLKGSADKHYKRWRDENHLFPDAIGHHIQGVTVHDGEWDSHEAIKIWNYTCDGKPEVFKERKEIDDENMVITFRGLEGHVMEQLKVYDLIYQFSQKSPDDIVCKITMIWEKRTDDSPEPSNYMKFLKSVVADMDEHVLKA</sequence>
<reference key="1">
    <citation type="submission" date="2001-01" db="EMBL/GenBank/DDBJ databases">
        <title>Molecular and phylogenetic analysis of a gene family in Arabidopsis thaliana with similarities to major latex, pathogenesis-related and ripening-induced proteins.</title>
        <authorList>
            <person name="Muller S."/>
            <person name="Klimt S."/>
            <person name="Hauser M.T."/>
        </authorList>
    </citation>
    <scope>NUCLEOTIDE SEQUENCE [GENOMIC DNA]</scope>
    <source>
        <strain>cv. Columbia</strain>
    </source>
</reference>
<reference key="2">
    <citation type="journal article" date="1999" name="Nature">
        <title>Sequence and analysis of chromosome 2 of the plant Arabidopsis thaliana.</title>
        <authorList>
            <person name="Lin X."/>
            <person name="Kaul S."/>
            <person name="Rounsley S.D."/>
            <person name="Shea T.P."/>
            <person name="Benito M.-I."/>
            <person name="Town C.D."/>
            <person name="Fujii C.Y."/>
            <person name="Mason T.M."/>
            <person name="Bowman C.L."/>
            <person name="Barnstead M.E."/>
            <person name="Feldblyum T.V."/>
            <person name="Buell C.R."/>
            <person name="Ketchum K.A."/>
            <person name="Lee J.J."/>
            <person name="Ronning C.M."/>
            <person name="Koo H.L."/>
            <person name="Moffat K.S."/>
            <person name="Cronin L.A."/>
            <person name="Shen M."/>
            <person name="Pai G."/>
            <person name="Van Aken S."/>
            <person name="Umayam L."/>
            <person name="Tallon L.J."/>
            <person name="Gill J.E."/>
            <person name="Adams M.D."/>
            <person name="Carrera A.J."/>
            <person name="Creasy T.H."/>
            <person name="Goodman H.M."/>
            <person name="Somerville C.R."/>
            <person name="Copenhaver G.P."/>
            <person name="Preuss D."/>
            <person name="Nierman W.C."/>
            <person name="White O."/>
            <person name="Eisen J.A."/>
            <person name="Salzberg S.L."/>
            <person name="Fraser C.M."/>
            <person name="Venter J.C."/>
        </authorList>
    </citation>
    <scope>NUCLEOTIDE SEQUENCE [LARGE SCALE GENOMIC DNA]</scope>
    <source>
        <strain>cv. Columbia</strain>
    </source>
</reference>
<reference key="3">
    <citation type="journal article" date="2017" name="Plant J.">
        <title>Araport11: a complete reannotation of the Arabidopsis thaliana reference genome.</title>
        <authorList>
            <person name="Cheng C.Y."/>
            <person name="Krishnakumar V."/>
            <person name="Chan A.P."/>
            <person name="Thibaud-Nissen F."/>
            <person name="Schobel S."/>
            <person name="Town C.D."/>
        </authorList>
    </citation>
    <scope>GENOME REANNOTATION</scope>
    <source>
        <strain>cv. Columbia</strain>
    </source>
</reference>
<reference key="4">
    <citation type="journal article" date="2003" name="Science">
        <title>Empirical analysis of transcriptional activity in the Arabidopsis genome.</title>
        <authorList>
            <person name="Yamada K."/>
            <person name="Lim J."/>
            <person name="Dale J.M."/>
            <person name="Chen H."/>
            <person name="Shinn P."/>
            <person name="Palm C.J."/>
            <person name="Southwick A.M."/>
            <person name="Wu H.C."/>
            <person name="Kim C.J."/>
            <person name="Nguyen M."/>
            <person name="Pham P.K."/>
            <person name="Cheuk R.F."/>
            <person name="Karlin-Newmann G."/>
            <person name="Liu S.X."/>
            <person name="Lam B."/>
            <person name="Sakano H."/>
            <person name="Wu T."/>
            <person name="Yu G."/>
            <person name="Miranda M."/>
            <person name="Quach H.L."/>
            <person name="Tripp M."/>
            <person name="Chang C.H."/>
            <person name="Lee J.M."/>
            <person name="Toriumi M.J."/>
            <person name="Chan M.M."/>
            <person name="Tang C.C."/>
            <person name="Onodera C.S."/>
            <person name="Deng J.M."/>
            <person name="Akiyama K."/>
            <person name="Ansari Y."/>
            <person name="Arakawa T."/>
            <person name="Banh J."/>
            <person name="Banno F."/>
            <person name="Bowser L."/>
            <person name="Brooks S.Y."/>
            <person name="Carninci P."/>
            <person name="Chao Q."/>
            <person name="Choy N."/>
            <person name="Enju A."/>
            <person name="Goldsmith A.D."/>
            <person name="Gurjal M."/>
            <person name="Hansen N.F."/>
            <person name="Hayashizaki Y."/>
            <person name="Johnson-Hopson C."/>
            <person name="Hsuan V.W."/>
            <person name="Iida K."/>
            <person name="Karnes M."/>
            <person name="Khan S."/>
            <person name="Koesema E."/>
            <person name="Ishida J."/>
            <person name="Jiang P.X."/>
            <person name="Jones T."/>
            <person name="Kawai J."/>
            <person name="Kamiya A."/>
            <person name="Meyers C."/>
            <person name="Nakajima M."/>
            <person name="Narusaka M."/>
            <person name="Seki M."/>
            <person name="Sakurai T."/>
            <person name="Satou M."/>
            <person name="Tamse R."/>
            <person name="Vaysberg M."/>
            <person name="Wallender E.K."/>
            <person name="Wong C."/>
            <person name="Yamamura Y."/>
            <person name="Yuan S."/>
            <person name="Shinozaki K."/>
            <person name="Davis R.W."/>
            <person name="Theologis A."/>
            <person name="Ecker J.R."/>
        </authorList>
    </citation>
    <scope>NUCLEOTIDE SEQUENCE [LARGE SCALE MRNA]</scope>
    <source>
        <strain>cv. Columbia</strain>
    </source>
</reference>
<gene>
    <name type="primary">MLP329</name>
    <name type="ordered locus">At2g01530</name>
    <name type="ORF">F2I9.15</name>
</gene>
<organism>
    <name type="scientific">Arabidopsis thaliana</name>
    <name type="common">Mouse-ear cress</name>
    <dbReference type="NCBI Taxonomy" id="3702"/>
    <lineage>
        <taxon>Eukaryota</taxon>
        <taxon>Viridiplantae</taxon>
        <taxon>Streptophyta</taxon>
        <taxon>Embryophyta</taxon>
        <taxon>Tracheophyta</taxon>
        <taxon>Spermatophyta</taxon>
        <taxon>Magnoliopsida</taxon>
        <taxon>eudicotyledons</taxon>
        <taxon>Gunneridae</taxon>
        <taxon>Pentapetalae</taxon>
        <taxon>rosids</taxon>
        <taxon>malvids</taxon>
        <taxon>Brassicales</taxon>
        <taxon>Brassicaceae</taxon>
        <taxon>Camelineae</taxon>
        <taxon>Arabidopsis</taxon>
    </lineage>
</organism>
<accession>Q9ZVF2</accession>
<name>ML329_ARATH</name>